<gene>
    <name evidence="1" type="primary">recR</name>
    <name type="ordered locus">PG_1255</name>
</gene>
<comment type="function">
    <text evidence="1">May play a role in DNA repair. It seems to be involved in an RecBC-independent recombinational process of DNA repair. It may act with RecF and RecO.</text>
</comment>
<comment type="similarity">
    <text evidence="1">Belongs to the RecR family.</text>
</comment>
<name>RECR_PORGI</name>
<feature type="chain" id="PRO_0000190362" description="Recombination protein RecR">
    <location>
        <begin position="1"/>
        <end position="207"/>
    </location>
</feature>
<feature type="domain" description="Toprim" evidence="1">
    <location>
        <begin position="83"/>
        <end position="178"/>
    </location>
</feature>
<feature type="zinc finger region" description="C4-type" evidence="1">
    <location>
        <begin position="60"/>
        <end position="75"/>
    </location>
</feature>
<dbReference type="EMBL" id="AE015924">
    <property type="protein sequence ID" value="AAQ66338.1"/>
    <property type="molecule type" value="Genomic_DNA"/>
</dbReference>
<dbReference type="RefSeq" id="WP_004584582.1">
    <property type="nucleotide sequence ID" value="NC_002950.2"/>
</dbReference>
<dbReference type="SMR" id="Q7MV45"/>
<dbReference type="STRING" id="242619.PG_1255"/>
<dbReference type="EnsemblBacteria" id="AAQ66338">
    <property type="protein sequence ID" value="AAQ66338"/>
    <property type="gene ID" value="PG_1255"/>
</dbReference>
<dbReference type="KEGG" id="pgi:PG_1255"/>
<dbReference type="eggNOG" id="COG0353">
    <property type="taxonomic scope" value="Bacteria"/>
</dbReference>
<dbReference type="HOGENOM" id="CLU_060739_1_1_10"/>
<dbReference type="Proteomes" id="UP000000588">
    <property type="component" value="Chromosome"/>
</dbReference>
<dbReference type="GO" id="GO:0003677">
    <property type="term" value="F:DNA binding"/>
    <property type="evidence" value="ECO:0007669"/>
    <property type="project" value="UniProtKB-UniRule"/>
</dbReference>
<dbReference type="GO" id="GO:0008270">
    <property type="term" value="F:zinc ion binding"/>
    <property type="evidence" value="ECO:0007669"/>
    <property type="project" value="UniProtKB-KW"/>
</dbReference>
<dbReference type="GO" id="GO:0006310">
    <property type="term" value="P:DNA recombination"/>
    <property type="evidence" value="ECO:0007669"/>
    <property type="project" value="UniProtKB-UniRule"/>
</dbReference>
<dbReference type="GO" id="GO:0006281">
    <property type="term" value="P:DNA repair"/>
    <property type="evidence" value="ECO:0007669"/>
    <property type="project" value="UniProtKB-UniRule"/>
</dbReference>
<dbReference type="CDD" id="cd01025">
    <property type="entry name" value="TOPRIM_recR"/>
    <property type="match status" value="1"/>
</dbReference>
<dbReference type="Gene3D" id="3.30.60.80">
    <property type="match status" value="1"/>
</dbReference>
<dbReference type="Gene3D" id="3.40.1360.10">
    <property type="match status" value="1"/>
</dbReference>
<dbReference type="Gene3D" id="6.10.250.240">
    <property type="match status" value="1"/>
</dbReference>
<dbReference type="Gene3D" id="1.10.8.420">
    <property type="entry name" value="RecR Domain 1"/>
    <property type="match status" value="1"/>
</dbReference>
<dbReference type="HAMAP" id="MF_00017">
    <property type="entry name" value="RecR"/>
    <property type="match status" value="1"/>
</dbReference>
<dbReference type="InterPro" id="IPR000093">
    <property type="entry name" value="DNA_Rcmb_RecR"/>
</dbReference>
<dbReference type="InterPro" id="IPR023627">
    <property type="entry name" value="Rcmb_RecR"/>
</dbReference>
<dbReference type="InterPro" id="IPR015967">
    <property type="entry name" value="Rcmb_RecR_Znf"/>
</dbReference>
<dbReference type="InterPro" id="IPR006171">
    <property type="entry name" value="TOPRIM_dom"/>
</dbReference>
<dbReference type="InterPro" id="IPR034137">
    <property type="entry name" value="TOPRIM_RecR"/>
</dbReference>
<dbReference type="NCBIfam" id="TIGR00615">
    <property type="entry name" value="recR"/>
    <property type="match status" value="1"/>
</dbReference>
<dbReference type="PANTHER" id="PTHR30446">
    <property type="entry name" value="RECOMBINATION PROTEIN RECR"/>
    <property type="match status" value="1"/>
</dbReference>
<dbReference type="PANTHER" id="PTHR30446:SF0">
    <property type="entry name" value="RECOMBINATION PROTEIN RECR"/>
    <property type="match status" value="1"/>
</dbReference>
<dbReference type="Pfam" id="PF21175">
    <property type="entry name" value="RecR_C"/>
    <property type="match status" value="1"/>
</dbReference>
<dbReference type="Pfam" id="PF21176">
    <property type="entry name" value="RecR_HhH"/>
    <property type="match status" value="1"/>
</dbReference>
<dbReference type="Pfam" id="PF02132">
    <property type="entry name" value="RecR_ZnF"/>
    <property type="match status" value="1"/>
</dbReference>
<dbReference type="Pfam" id="PF13662">
    <property type="entry name" value="Toprim_4"/>
    <property type="match status" value="1"/>
</dbReference>
<dbReference type="SMART" id="SM00493">
    <property type="entry name" value="TOPRIM"/>
    <property type="match status" value="1"/>
</dbReference>
<dbReference type="SUPFAM" id="SSF111304">
    <property type="entry name" value="Recombination protein RecR"/>
    <property type="match status" value="1"/>
</dbReference>
<dbReference type="PROSITE" id="PS01300">
    <property type="entry name" value="RECR"/>
    <property type="match status" value="1"/>
</dbReference>
<dbReference type="PROSITE" id="PS50880">
    <property type="entry name" value="TOPRIM"/>
    <property type="match status" value="1"/>
</dbReference>
<proteinExistence type="inferred from homology"/>
<evidence type="ECO:0000255" key="1">
    <source>
        <dbReference type="HAMAP-Rule" id="MF_00017"/>
    </source>
</evidence>
<organism>
    <name type="scientific">Porphyromonas gingivalis (strain ATCC BAA-308 / W83)</name>
    <dbReference type="NCBI Taxonomy" id="242619"/>
    <lineage>
        <taxon>Bacteria</taxon>
        <taxon>Pseudomonadati</taxon>
        <taxon>Bacteroidota</taxon>
        <taxon>Bacteroidia</taxon>
        <taxon>Bacteroidales</taxon>
        <taxon>Porphyromonadaceae</taxon>
        <taxon>Porphyromonas</taxon>
    </lineage>
</organism>
<protein>
    <recommendedName>
        <fullName evidence="1">Recombination protein RecR</fullName>
    </recommendedName>
</protein>
<accession>Q7MV45</accession>
<sequence length="207" mass="23056">MIQKYSSRLLEKAIDQFATLPGVGRKTALRLALYLLRQPVENTRQFAAALVDLREHISYCRHCHNISDSDVCTICADPTRDQSTLCVVENIRDVMAIENTSQYRGLYHVLGGVISPMDGIGPGDLQIDSLVHRVASEQIHEVILALSTTMEGDTTNFFLFRKLEPTGVRVSVIARGIAIGDEIEYADEITLGRSILNRTDFSDSVKF</sequence>
<reference key="1">
    <citation type="journal article" date="2003" name="J. Bacteriol.">
        <title>Complete genome sequence of the oral pathogenic bacterium Porphyromonas gingivalis strain W83.</title>
        <authorList>
            <person name="Nelson K.E."/>
            <person name="Fleischmann R.D."/>
            <person name="DeBoy R.T."/>
            <person name="Paulsen I.T."/>
            <person name="Fouts D.E."/>
            <person name="Eisen J.A."/>
            <person name="Daugherty S.C."/>
            <person name="Dodson R.J."/>
            <person name="Durkin A.S."/>
            <person name="Gwinn M.L."/>
            <person name="Haft D.H."/>
            <person name="Kolonay J.F."/>
            <person name="Nelson W.C."/>
            <person name="Mason T.M."/>
            <person name="Tallon L."/>
            <person name="Gray J."/>
            <person name="Granger D."/>
            <person name="Tettelin H."/>
            <person name="Dong H."/>
            <person name="Galvin J.L."/>
            <person name="Duncan M.J."/>
            <person name="Dewhirst F.E."/>
            <person name="Fraser C.M."/>
        </authorList>
    </citation>
    <scope>NUCLEOTIDE SEQUENCE [LARGE SCALE GENOMIC DNA]</scope>
    <source>
        <strain>ATCC BAA-308 / W83</strain>
    </source>
</reference>
<keyword id="KW-0227">DNA damage</keyword>
<keyword id="KW-0233">DNA recombination</keyword>
<keyword id="KW-0234">DNA repair</keyword>
<keyword id="KW-0479">Metal-binding</keyword>
<keyword id="KW-1185">Reference proteome</keyword>
<keyword id="KW-0862">Zinc</keyword>
<keyword id="KW-0863">Zinc-finger</keyword>